<dbReference type="EC" id="4.1.3.40" evidence="1"/>
<dbReference type="EMBL" id="CP000544">
    <property type="protein sequence ID" value="ABM61742.1"/>
    <property type="molecule type" value="Genomic_DNA"/>
</dbReference>
<dbReference type="SMR" id="A1WVN0"/>
<dbReference type="STRING" id="349124.Hhal_0966"/>
<dbReference type="KEGG" id="hha:Hhal_0966"/>
<dbReference type="eggNOG" id="COG3161">
    <property type="taxonomic scope" value="Bacteria"/>
</dbReference>
<dbReference type="HOGENOM" id="CLU_096824_1_1_6"/>
<dbReference type="UniPathway" id="UPA00232"/>
<dbReference type="Proteomes" id="UP000000647">
    <property type="component" value="Chromosome"/>
</dbReference>
<dbReference type="GO" id="GO:0005829">
    <property type="term" value="C:cytosol"/>
    <property type="evidence" value="ECO:0007669"/>
    <property type="project" value="TreeGrafter"/>
</dbReference>
<dbReference type="GO" id="GO:0008813">
    <property type="term" value="F:chorismate lyase activity"/>
    <property type="evidence" value="ECO:0007669"/>
    <property type="project" value="UniProtKB-UniRule"/>
</dbReference>
<dbReference type="GO" id="GO:0042866">
    <property type="term" value="P:pyruvate biosynthetic process"/>
    <property type="evidence" value="ECO:0007669"/>
    <property type="project" value="UniProtKB-UniRule"/>
</dbReference>
<dbReference type="GO" id="GO:0006744">
    <property type="term" value="P:ubiquinone biosynthetic process"/>
    <property type="evidence" value="ECO:0007669"/>
    <property type="project" value="UniProtKB-UniRule"/>
</dbReference>
<dbReference type="Gene3D" id="3.40.1410.10">
    <property type="entry name" value="Chorismate lyase-like"/>
    <property type="match status" value="1"/>
</dbReference>
<dbReference type="HAMAP" id="MF_01632">
    <property type="entry name" value="UbiC"/>
    <property type="match status" value="1"/>
</dbReference>
<dbReference type="InterPro" id="IPR007440">
    <property type="entry name" value="Chorismate--pyruvate_lyase"/>
</dbReference>
<dbReference type="InterPro" id="IPR028978">
    <property type="entry name" value="Chorismate_lyase_/UTRA_dom_sf"/>
</dbReference>
<dbReference type="PANTHER" id="PTHR38683">
    <property type="entry name" value="CHORISMATE PYRUVATE-LYASE"/>
    <property type="match status" value="1"/>
</dbReference>
<dbReference type="PANTHER" id="PTHR38683:SF1">
    <property type="entry name" value="CHORISMATE PYRUVATE-LYASE"/>
    <property type="match status" value="1"/>
</dbReference>
<dbReference type="Pfam" id="PF04345">
    <property type="entry name" value="Chor_lyase"/>
    <property type="match status" value="1"/>
</dbReference>
<dbReference type="SUPFAM" id="SSF64288">
    <property type="entry name" value="Chorismate lyase-like"/>
    <property type="match status" value="1"/>
</dbReference>
<reference key="1">
    <citation type="submission" date="2006-12" db="EMBL/GenBank/DDBJ databases">
        <title>Complete sequence of Halorhodospira halophila SL1.</title>
        <authorList>
            <consortium name="US DOE Joint Genome Institute"/>
            <person name="Copeland A."/>
            <person name="Lucas S."/>
            <person name="Lapidus A."/>
            <person name="Barry K."/>
            <person name="Detter J.C."/>
            <person name="Glavina del Rio T."/>
            <person name="Hammon N."/>
            <person name="Israni S."/>
            <person name="Dalin E."/>
            <person name="Tice H."/>
            <person name="Pitluck S."/>
            <person name="Saunders E."/>
            <person name="Brettin T."/>
            <person name="Bruce D."/>
            <person name="Han C."/>
            <person name="Tapia R."/>
            <person name="Schmutz J."/>
            <person name="Larimer F."/>
            <person name="Land M."/>
            <person name="Hauser L."/>
            <person name="Kyrpides N."/>
            <person name="Mikhailova N."/>
            <person name="Hoff W."/>
            <person name="Richardson P."/>
        </authorList>
    </citation>
    <scope>NUCLEOTIDE SEQUENCE [LARGE SCALE GENOMIC DNA]</scope>
    <source>
        <strain>DSM 244 / SL1</strain>
    </source>
</reference>
<accession>A1WVN0</accession>
<gene>
    <name evidence="1" type="primary">ubiC</name>
    <name type="ordered locus">Hhal_0966</name>
</gene>
<name>UBIC_HALHL</name>
<feature type="chain" id="PRO_0000292067" description="Probable chorismate pyruvate-lyase">
    <location>
        <begin position="1"/>
        <end position="187"/>
    </location>
</feature>
<feature type="binding site" evidence="1">
    <location>
        <position position="80"/>
    </location>
    <ligand>
        <name>substrate</name>
    </ligand>
</feature>
<feature type="binding site" evidence="1">
    <location>
        <position position="117"/>
    </location>
    <ligand>
        <name>substrate</name>
    </ligand>
</feature>
<feature type="binding site" evidence="1">
    <location>
        <position position="176"/>
    </location>
    <ligand>
        <name>substrate</name>
    </ligand>
</feature>
<proteinExistence type="inferred from homology"/>
<sequence length="187" mass="20591">MREHAAWQPQAAAWRPGVAVVPGRPAPAVQRLLTERGSLTARLERLGPVRVHVLREAWQRPAPDEGVALELPVGRHAWLREVVLDCEGGPTIYARSIVPDRLLGPLARLPRLGERPLGRLLFSAADVQRGPLAVARLRGREPLVRWLRGHGLPSPAGGWARRSTLSVAGRRLLVTEVFFPEGVEGER</sequence>
<organism>
    <name type="scientific">Halorhodospira halophila (strain DSM 244 / SL1)</name>
    <name type="common">Ectothiorhodospira halophila (strain DSM 244 / SL1)</name>
    <dbReference type="NCBI Taxonomy" id="349124"/>
    <lineage>
        <taxon>Bacteria</taxon>
        <taxon>Pseudomonadati</taxon>
        <taxon>Pseudomonadota</taxon>
        <taxon>Gammaproteobacteria</taxon>
        <taxon>Chromatiales</taxon>
        <taxon>Ectothiorhodospiraceae</taxon>
        <taxon>Halorhodospira</taxon>
    </lineage>
</organism>
<evidence type="ECO:0000255" key="1">
    <source>
        <dbReference type="HAMAP-Rule" id="MF_01632"/>
    </source>
</evidence>
<protein>
    <recommendedName>
        <fullName evidence="1">Probable chorismate pyruvate-lyase</fullName>
        <shortName evidence="1">CL</shortName>
        <shortName evidence="1">CPL</shortName>
        <ecNumber evidence="1">4.1.3.40</ecNumber>
    </recommendedName>
</protein>
<keyword id="KW-0963">Cytoplasm</keyword>
<keyword id="KW-0456">Lyase</keyword>
<keyword id="KW-0670">Pyruvate</keyword>
<keyword id="KW-1185">Reference proteome</keyword>
<keyword id="KW-0831">Ubiquinone biosynthesis</keyword>
<comment type="function">
    <text evidence="1">Removes the pyruvyl group from chorismate, with concomitant aromatization of the ring, to provide 4-hydroxybenzoate (4HB) for the ubiquinone pathway.</text>
</comment>
<comment type="catalytic activity">
    <reaction evidence="1">
        <text>chorismate = 4-hydroxybenzoate + pyruvate</text>
        <dbReference type="Rhea" id="RHEA:16505"/>
        <dbReference type="ChEBI" id="CHEBI:15361"/>
        <dbReference type="ChEBI" id="CHEBI:17879"/>
        <dbReference type="ChEBI" id="CHEBI:29748"/>
        <dbReference type="EC" id="4.1.3.40"/>
    </reaction>
</comment>
<comment type="pathway">
    <text evidence="1">Cofactor biosynthesis; ubiquinone biosynthesis.</text>
</comment>
<comment type="subcellular location">
    <subcellularLocation>
        <location evidence="1">Cytoplasm</location>
    </subcellularLocation>
</comment>
<comment type="similarity">
    <text evidence="1">Belongs to the UbiC family.</text>
</comment>